<organism>
    <name type="scientific">Xylella fastidiosa (strain M12)</name>
    <dbReference type="NCBI Taxonomy" id="405440"/>
    <lineage>
        <taxon>Bacteria</taxon>
        <taxon>Pseudomonadati</taxon>
        <taxon>Pseudomonadota</taxon>
        <taxon>Gammaproteobacteria</taxon>
        <taxon>Lysobacterales</taxon>
        <taxon>Lysobacteraceae</taxon>
        <taxon>Xylella</taxon>
    </lineage>
</organism>
<evidence type="ECO:0000255" key="1">
    <source>
        <dbReference type="HAMAP-Rule" id="MF_00009"/>
    </source>
</evidence>
<sequence>MTRGPIFLNVGISYGLPRTKLPAAVSFRKWVAATLQGRIRKADLAIRIVDEKEGRALNYHYRNKDYATNVLSFPAQLPEPFPKALKIPLLGDIVMCAPVIAREATEQGKSLSAHYAHLTVHGTLHLLGWNHEDHQEADAMEQLEREILANLGISDPYLGEY</sequence>
<protein>
    <recommendedName>
        <fullName evidence="1">Endoribonuclease YbeY</fullName>
        <ecNumber evidence="1">3.1.-.-</ecNumber>
    </recommendedName>
</protein>
<dbReference type="EC" id="3.1.-.-" evidence="1"/>
<dbReference type="EMBL" id="CP000941">
    <property type="protein sequence ID" value="ACA12822.1"/>
    <property type="molecule type" value="Genomic_DNA"/>
</dbReference>
<dbReference type="RefSeq" id="WP_004089607.1">
    <property type="nucleotide sequence ID" value="NC_010513.1"/>
</dbReference>
<dbReference type="SMR" id="B0U4P3"/>
<dbReference type="GeneID" id="93905630"/>
<dbReference type="KEGG" id="xfm:Xfasm12_1949"/>
<dbReference type="HOGENOM" id="CLU_106710_0_1_6"/>
<dbReference type="GO" id="GO:0005737">
    <property type="term" value="C:cytoplasm"/>
    <property type="evidence" value="ECO:0007669"/>
    <property type="project" value="UniProtKB-SubCell"/>
</dbReference>
<dbReference type="GO" id="GO:0004222">
    <property type="term" value="F:metalloendopeptidase activity"/>
    <property type="evidence" value="ECO:0007669"/>
    <property type="project" value="InterPro"/>
</dbReference>
<dbReference type="GO" id="GO:0004521">
    <property type="term" value="F:RNA endonuclease activity"/>
    <property type="evidence" value="ECO:0007669"/>
    <property type="project" value="UniProtKB-UniRule"/>
</dbReference>
<dbReference type="GO" id="GO:0008270">
    <property type="term" value="F:zinc ion binding"/>
    <property type="evidence" value="ECO:0007669"/>
    <property type="project" value="UniProtKB-UniRule"/>
</dbReference>
<dbReference type="GO" id="GO:0006364">
    <property type="term" value="P:rRNA processing"/>
    <property type="evidence" value="ECO:0007669"/>
    <property type="project" value="UniProtKB-UniRule"/>
</dbReference>
<dbReference type="Gene3D" id="3.40.390.30">
    <property type="entry name" value="Metalloproteases ('zincins'), catalytic domain"/>
    <property type="match status" value="1"/>
</dbReference>
<dbReference type="HAMAP" id="MF_00009">
    <property type="entry name" value="Endoribonucl_YbeY"/>
    <property type="match status" value="1"/>
</dbReference>
<dbReference type="InterPro" id="IPR023091">
    <property type="entry name" value="MetalPrtase_cat_dom_sf_prd"/>
</dbReference>
<dbReference type="InterPro" id="IPR002036">
    <property type="entry name" value="YbeY"/>
</dbReference>
<dbReference type="InterPro" id="IPR020549">
    <property type="entry name" value="YbeY_CS"/>
</dbReference>
<dbReference type="NCBIfam" id="TIGR00043">
    <property type="entry name" value="rRNA maturation RNase YbeY"/>
    <property type="match status" value="1"/>
</dbReference>
<dbReference type="PANTHER" id="PTHR46986">
    <property type="entry name" value="ENDORIBONUCLEASE YBEY, CHLOROPLASTIC"/>
    <property type="match status" value="1"/>
</dbReference>
<dbReference type="PANTHER" id="PTHR46986:SF1">
    <property type="entry name" value="ENDORIBONUCLEASE YBEY, CHLOROPLASTIC"/>
    <property type="match status" value="1"/>
</dbReference>
<dbReference type="Pfam" id="PF02130">
    <property type="entry name" value="YbeY"/>
    <property type="match status" value="1"/>
</dbReference>
<dbReference type="SUPFAM" id="SSF55486">
    <property type="entry name" value="Metalloproteases ('zincins'), catalytic domain"/>
    <property type="match status" value="1"/>
</dbReference>
<dbReference type="PROSITE" id="PS01306">
    <property type="entry name" value="UPF0054"/>
    <property type="match status" value="1"/>
</dbReference>
<comment type="function">
    <text evidence="1">Single strand-specific metallo-endoribonuclease involved in late-stage 70S ribosome quality control and in maturation of the 3' terminus of the 16S rRNA.</text>
</comment>
<comment type="cofactor">
    <cofactor evidence="1">
        <name>Zn(2+)</name>
        <dbReference type="ChEBI" id="CHEBI:29105"/>
    </cofactor>
    <text evidence="1">Binds 1 zinc ion.</text>
</comment>
<comment type="subcellular location">
    <subcellularLocation>
        <location evidence="1">Cytoplasm</location>
    </subcellularLocation>
</comment>
<comment type="similarity">
    <text evidence="1">Belongs to the endoribonuclease YbeY family.</text>
</comment>
<feature type="chain" id="PRO_1000089230" description="Endoribonuclease YbeY">
    <location>
        <begin position="1"/>
        <end position="161"/>
    </location>
</feature>
<feature type="binding site" evidence="1">
    <location>
        <position position="121"/>
    </location>
    <ligand>
        <name>Zn(2+)</name>
        <dbReference type="ChEBI" id="CHEBI:29105"/>
        <note>catalytic</note>
    </ligand>
</feature>
<feature type="binding site" evidence="1">
    <location>
        <position position="125"/>
    </location>
    <ligand>
        <name>Zn(2+)</name>
        <dbReference type="ChEBI" id="CHEBI:29105"/>
        <note>catalytic</note>
    </ligand>
</feature>
<feature type="binding site" evidence="1">
    <location>
        <position position="131"/>
    </location>
    <ligand>
        <name>Zn(2+)</name>
        <dbReference type="ChEBI" id="CHEBI:29105"/>
        <note>catalytic</note>
    </ligand>
</feature>
<gene>
    <name evidence="1" type="primary">ybeY</name>
    <name type="ordered locus">Xfasm12_1949</name>
</gene>
<name>YBEY_XYLFM</name>
<keyword id="KW-0963">Cytoplasm</keyword>
<keyword id="KW-0255">Endonuclease</keyword>
<keyword id="KW-0378">Hydrolase</keyword>
<keyword id="KW-0479">Metal-binding</keyword>
<keyword id="KW-0540">Nuclease</keyword>
<keyword id="KW-0690">Ribosome biogenesis</keyword>
<keyword id="KW-0698">rRNA processing</keyword>
<keyword id="KW-0862">Zinc</keyword>
<accession>B0U4P3</accession>
<reference key="1">
    <citation type="journal article" date="2010" name="J. Bacteriol.">
        <title>Whole genome sequences of two Xylella fastidiosa strains (M12 and M23) causing almond leaf scorch disease in California.</title>
        <authorList>
            <person name="Chen J."/>
            <person name="Xie G."/>
            <person name="Han S."/>
            <person name="Chertkov O."/>
            <person name="Sims D."/>
            <person name="Civerolo E.L."/>
        </authorList>
    </citation>
    <scope>NUCLEOTIDE SEQUENCE [LARGE SCALE GENOMIC DNA]</scope>
    <source>
        <strain>M12</strain>
    </source>
</reference>
<proteinExistence type="inferred from homology"/>